<feature type="chain" id="PRO_0000397661" description="rRNA biogenesis protein rrp36">
    <location>
        <begin position="1"/>
        <end position="301"/>
    </location>
</feature>
<feature type="region of interest" description="Disordered" evidence="3">
    <location>
        <begin position="1"/>
        <end position="169"/>
    </location>
</feature>
<feature type="region of interest" description="Disordered" evidence="3">
    <location>
        <begin position="199"/>
        <end position="232"/>
    </location>
</feature>
<feature type="region of interest" description="Disordered" evidence="3">
    <location>
        <begin position="282"/>
        <end position="301"/>
    </location>
</feature>
<feature type="coiled-coil region" evidence="2">
    <location>
        <begin position="182"/>
        <end position="272"/>
    </location>
</feature>
<feature type="compositionally biased region" description="Acidic residues" evidence="3">
    <location>
        <begin position="43"/>
        <end position="70"/>
    </location>
</feature>
<feature type="compositionally biased region" description="Basic and acidic residues" evidence="3">
    <location>
        <begin position="113"/>
        <end position="128"/>
    </location>
</feature>
<feature type="compositionally biased region" description="Basic and acidic residues" evidence="3">
    <location>
        <begin position="145"/>
        <end position="164"/>
    </location>
</feature>
<feature type="compositionally biased region" description="Basic and acidic residues" evidence="3">
    <location>
        <begin position="199"/>
        <end position="220"/>
    </location>
</feature>
<feature type="compositionally biased region" description="Basic and acidic residues" evidence="3">
    <location>
        <begin position="286"/>
        <end position="301"/>
    </location>
</feature>
<sequence>MLSTKRKALDTGLQRRVRARRESSEEIEESSSDSAPSEIGRDDNEEEESSSDETEDEVEEEASESEEETSNDAAASISFGALAKAQATMSKPSKRDSKKSKKSNADGWEDNEATERKAGKKDQRDFTRSSKNAPTEISSKKAVSRRREVVPVKKREIRDPRFDPTHGPVDMGKIEKVYDFLVDYREDEIKKLRKTIKKTKDEDEKEKLKRDLLSMESRKKTDAKKRKAREILDKHRKEEKELVKEGKTPYYLKKAEQKKRVLLDTYGELKGRQLDRVIERRRKKVEGKEKKNMPRARRVVE</sequence>
<keyword id="KW-0175">Coiled coil</keyword>
<keyword id="KW-0539">Nucleus</keyword>
<keyword id="KW-1185">Reference proteome</keyword>
<keyword id="KW-0687">Ribonucleoprotein</keyword>
<keyword id="KW-0690">Ribosome biogenesis</keyword>
<keyword id="KW-0698">rRNA processing</keyword>
<accession>A7E4K0</accession>
<proteinExistence type="inferred from homology"/>
<comment type="function">
    <text evidence="1">Component of the 90S pre-ribosome involved in the maturation of rRNAs. Required for early cleavages of the pre-RNAs in the 40S ribosomal subunit maturation pathway (By similarity).</text>
</comment>
<comment type="subunit">
    <text evidence="1">Associates with 90S and pre-40S pre-ribosomal particles.</text>
</comment>
<comment type="subcellular location">
    <subcellularLocation>
        <location evidence="1">Nucleus</location>
        <location evidence="1">Nucleolus</location>
    </subcellularLocation>
</comment>
<comment type="similarity">
    <text evidence="4">Belongs to the RRP36 family.</text>
</comment>
<gene>
    <name type="primary">rrp36</name>
    <name type="ORF">SS1G_00222</name>
</gene>
<protein>
    <recommendedName>
        <fullName>rRNA biogenesis protein rrp36</fullName>
    </recommendedName>
    <alternativeName>
        <fullName>Ribosomal RNA-processing protein 36</fullName>
    </alternativeName>
</protein>
<evidence type="ECO:0000250" key="1"/>
<evidence type="ECO:0000255" key="2"/>
<evidence type="ECO:0000256" key="3">
    <source>
        <dbReference type="SAM" id="MobiDB-lite"/>
    </source>
</evidence>
<evidence type="ECO:0000305" key="4"/>
<organism>
    <name type="scientific">Sclerotinia sclerotiorum (strain ATCC 18683 / 1980 / Ss-1)</name>
    <name type="common">White mold</name>
    <name type="synonym">Whetzelinia sclerotiorum</name>
    <dbReference type="NCBI Taxonomy" id="665079"/>
    <lineage>
        <taxon>Eukaryota</taxon>
        <taxon>Fungi</taxon>
        <taxon>Dikarya</taxon>
        <taxon>Ascomycota</taxon>
        <taxon>Pezizomycotina</taxon>
        <taxon>Leotiomycetes</taxon>
        <taxon>Helotiales</taxon>
        <taxon>Sclerotiniaceae</taxon>
        <taxon>Sclerotinia</taxon>
    </lineage>
</organism>
<name>RRP36_SCLS1</name>
<reference key="1">
    <citation type="journal article" date="2011" name="PLoS Genet.">
        <title>Genomic analysis of the necrotrophic fungal pathogens Sclerotinia sclerotiorum and Botrytis cinerea.</title>
        <authorList>
            <person name="Amselem J."/>
            <person name="Cuomo C.A."/>
            <person name="van Kan J.A.L."/>
            <person name="Viaud M."/>
            <person name="Benito E.P."/>
            <person name="Couloux A."/>
            <person name="Coutinho P.M."/>
            <person name="de Vries R.P."/>
            <person name="Dyer P.S."/>
            <person name="Fillinger S."/>
            <person name="Fournier E."/>
            <person name="Gout L."/>
            <person name="Hahn M."/>
            <person name="Kohn L."/>
            <person name="Lapalu N."/>
            <person name="Plummer K.M."/>
            <person name="Pradier J.-M."/>
            <person name="Quevillon E."/>
            <person name="Sharon A."/>
            <person name="Simon A."/>
            <person name="ten Have A."/>
            <person name="Tudzynski B."/>
            <person name="Tudzynski P."/>
            <person name="Wincker P."/>
            <person name="Andrew M."/>
            <person name="Anthouard V."/>
            <person name="Beever R.E."/>
            <person name="Beffa R."/>
            <person name="Benoit I."/>
            <person name="Bouzid O."/>
            <person name="Brault B."/>
            <person name="Chen Z."/>
            <person name="Choquer M."/>
            <person name="Collemare J."/>
            <person name="Cotton P."/>
            <person name="Danchin E.G."/>
            <person name="Da Silva C."/>
            <person name="Gautier A."/>
            <person name="Giraud C."/>
            <person name="Giraud T."/>
            <person name="Gonzalez C."/>
            <person name="Grossetete S."/>
            <person name="Gueldener U."/>
            <person name="Henrissat B."/>
            <person name="Howlett B.J."/>
            <person name="Kodira C."/>
            <person name="Kretschmer M."/>
            <person name="Lappartient A."/>
            <person name="Leroch M."/>
            <person name="Levis C."/>
            <person name="Mauceli E."/>
            <person name="Neuveglise C."/>
            <person name="Oeser B."/>
            <person name="Pearson M."/>
            <person name="Poulain J."/>
            <person name="Poussereau N."/>
            <person name="Quesneville H."/>
            <person name="Rascle C."/>
            <person name="Schumacher J."/>
            <person name="Segurens B."/>
            <person name="Sexton A."/>
            <person name="Silva E."/>
            <person name="Sirven C."/>
            <person name="Soanes D.M."/>
            <person name="Talbot N.J."/>
            <person name="Templeton M."/>
            <person name="Yandava C."/>
            <person name="Yarden O."/>
            <person name="Zeng Q."/>
            <person name="Rollins J.A."/>
            <person name="Lebrun M.-H."/>
            <person name="Dickman M."/>
        </authorList>
    </citation>
    <scope>NUCLEOTIDE SEQUENCE [LARGE SCALE GENOMIC DNA]</scope>
    <source>
        <strain>ATCC 18683 / 1980 / Ss-1</strain>
    </source>
</reference>
<dbReference type="EMBL" id="CH476621">
    <property type="protein sequence ID" value="EDN90822.1"/>
    <property type="molecule type" value="Genomic_DNA"/>
</dbReference>
<dbReference type="RefSeq" id="XP_001598136.1">
    <property type="nucleotide sequence ID" value="XM_001598086.1"/>
</dbReference>
<dbReference type="SMR" id="A7E4K0"/>
<dbReference type="FunCoup" id="A7E4K0">
    <property type="interactions" value="508"/>
</dbReference>
<dbReference type="STRING" id="665079.A7E4K0"/>
<dbReference type="EnsemblFungi" id="EDN90822">
    <property type="protein sequence ID" value="EDN90822"/>
    <property type="gene ID" value="SS1G_00222"/>
</dbReference>
<dbReference type="GeneID" id="5494957"/>
<dbReference type="KEGG" id="ssl:SS1G_00222"/>
<dbReference type="VEuPathDB" id="FungiDB:sscle_03g028800"/>
<dbReference type="eggNOG" id="KOG3190">
    <property type="taxonomic scope" value="Eukaryota"/>
</dbReference>
<dbReference type="HOGENOM" id="CLU_048802_0_0_1"/>
<dbReference type="InParanoid" id="A7E4K0"/>
<dbReference type="OMA" id="ERKEMPW"/>
<dbReference type="OrthoDB" id="448446at2759"/>
<dbReference type="Proteomes" id="UP000001312">
    <property type="component" value="Unassembled WGS sequence"/>
</dbReference>
<dbReference type="GO" id="GO:0030686">
    <property type="term" value="C:90S preribosome"/>
    <property type="evidence" value="ECO:0000318"/>
    <property type="project" value="GO_Central"/>
</dbReference>
<dbReference type="GO" id="GO:0005730">
    <property type="term" value="C:nucleolus"/>
    <property type="evidence" value="ECO:0000318"/>
    <property type="project" value="GO_Central"/>
</dbReference>
<dbReference type="GO" id="GO:0000462">
    <property type="term" value="P:maturation of SSU-rRNA from tricistronic rRNA transcript (SSU-rRNA, 5.8S rRNA, LSU-rRNA)"/>
    <property type="evidence" value="ECO:0000318"/>
    <property type="project" value="GO_Central"/>
</dbReference>
<dbReference type="InterPro" id="IPR009292">
    <property type="entry name" value="RRP36"/>
</dbReference>
<dbReference type="PANTHER" id="PTHR21738">
    <property type="entry name" value="RIBOSOMAL RNA PROCESSING PROTEIN 36 HOMOLOG"/>
    <property type="match status" value="1"/>
</dbReference>
<dbReference type="PANTHER" id="PTHR21738:SF0">
    <property type="entry name" value="RIBOSOMAL RNA PROCESSING PROTEIN 36 HOMOLOG"/>
    <property type="match status" value="1"/>
</dbReference>
<dbReference type="Pfam" id="PF06102">
    <property type="entry name" value="RRP36"/>
    <property type="match status" value="1"/>
</dbReference>